<comment type="function">
    <text evidence="1">Involved in peptide bond synthesis. Stimulates efficient translation and peptide-bond synthesis on native or reconstituted 70S ribosomes in vitro. Probably functions indirectly by altering the affinity of the ribosome for aminoacyl-tRNA, thus increasing their reactivity as acceptors for peptidyl transferase.</text>
</comment>
<comment type="pathway">
    <text evidence="1">Protein biosynthesis; polypeptide chain elongation.</text>
</comment>
<comment type="subcellular location">
    <subcellularLocation>
        <location evidence="1">Cytoplasm</location>
    </subcellularLocation>
</comment>
<comment type="similarity">
    <text evidence="1">Belongs to the elongation factor P family.</text>
</comment>
<evidence type="ECO:0000255" key="1">
    <source>
        <dbReference type="HAMAP-Rule" id="MF_00141"/>
    </source>
</evidence>
<dbReference type="EMBL" id="CP000806">
    <property type="protein sequence ID" value="ACB51472.1"/>
    <property type="molecule type" value="Genomic_DNA"/>
</dbReference>
<dbReference type="RefSeq" id="WP_009546875.1">
    <property type="nucleotide sequence ID" value="NC_010546.1"/>
</dbReference>
<dbReference type="SMR" id="B1WNP3"/>
<dbReference type="STRING" id="43989.cce_2122"/>
<dbReference type="KEGG" id="cyt:cce_2122"/>
<dbReference type="eggNOG" id="COG0231">
    <property type="taxonomic scope" value="Bacteria"/>
</dbReference>
<dbReference type="HOGENOM" id="CLU_074944_0_1_3"/>
<dbReference type="OrthoDB" id="9801844at2"/>
<dbReference type="UniPathway" id="UPA00345"/>
<dbReference type="Proteomes" id="UP000001203">
    <property type="component" value="Chromosome circular"/>
</dbReference>
<dbReference type="GO" id="GO:0005737">
    <property type="term" value="C:cytoplasm"/>
    <property type="evidence" value="ECO:0007669"/>
    <property type="project" value="UniProtKB-SubCell"/>
</dbReference>
<dbReference type="GO" id="GO:0003746">
    <property type="term" value="F:translation elongation factor activity"/>
    <property type="evidence" value="ECO:0007669"/>
    <property type="project" value="UniProtKB-UniRule"/>
</dbReference>
<dbReference type="GO" id="GO:0043043">
    <property type="term" value="P:peptide biosynthetic process"/>
    <property type="evidence" value="ECO:0007669"/>
    <property type="project" value="InterPro"/>
</dbReference>
<dbReference type="CDD" id="cd04470">
    <property type="entry name" value="S1_EF-P_repeat_1"/>
    <property type="match status" value="1"/>
</dbReference>
<dbReference type="CDD" id="cd05794">
    <property type="entry name" value="S1_EF-P_repeat_2"/>
    <property type="match status" value="1"/>
</dbReference>
<dbReference type="FunFam" id="2.30.30.30:FF:000003">
    <property type="entry name" value="Elongation factor P"/>
    <property type="match status" value="1"/>
</dbReference>
<dbReference type="FunFam" id="2.40.50.140:FF:000004">
    <property type="entry name" value="Elongation factor P"/>
    <property type="match status" value="1"/>
</dbReference>
<dbReference type="FunFam" id="2.40.50.140:FF:000009">
    <property type="entry name" value="Elongation factor P"/>
    <property type="match status" value="1"/>
</dbReference>
<dbReference type="Gene3D" id="2.30.30.30">
    <property type="match status" value="1"/>
</dbReference>
<dbReference type="Gene3D" id="2.40.50.140">
    <property type="entry name" value="Nucleic acid-binding proteins"/>
    <property type="match status" value="2"/>
</dbReference>
<dbReference type="HAMAP" id="MF_00141">
    <property type="entry name" value="EF_P"/>
    <property type="match status" value="1"/>
</dbReference>
<dbReference type="InterPro" id="IPR015365">
    <property type="entry name" value="Elong-fact-P_C"/>
</dbReference>
<dbReference type="InterPro" id="IPR012340">
    <property type="entry name" value="NA-bd_OB-fold"/>
</dbReference>
<dbReference type="InterPro" id="IPR014722">
    <property type="entry name" value="Rib_uL2_dom2"/>
</dbReference>
<dbReference type="InterPro" id="IPR020599">
    <property type="entry name" value="Transl_elong_fac_P/YeiP"/>
</dbReference>
<dbReference type="InterPro" id="IPR013185">
    <property type="entry name" value="Transl_elong_KOW-like"/>
</dbReference>
<dbReference type="InterPro" id="IPR001059">
    <property type="entry name" value="Transl_elong_P/YeiP_cen"/>
</dbReference>
<dbReference type="InterPro" id="IPR013852">
    <property type="entry name" value="Transl_elong_P/YeiP_CS"/>
</dbReference>
<dbReference type="InterPro" id="IPR011768">
    <property type="entry name" value="Transl_elongation_fac_P"/>
</dbReference>
<dbReference type="InterPro" id="IPR008991">
    <property type="entry name" value="Translation_prot_SH3-like_sf"/>
</dbReference>
<dbReference type="NCBIfam" id="TIGR00038">
    <property type="entry name" value="efp"/>
    <property type="match status" value="1"/>
</dbReference>
<dbReference type="NCBIfam" id="NF001810">
    <property type="entry name" value="PRK00529.1"/>
    <property type="match status" value="1"/>
</dbReference>
<dbReference type="PANTHER" id="PTHR30053">
    <property type="entry name" value="ELONGATION FACTOR P"/>
    <property type="match status" value="1"/>
</dbReference>
<dbReference type="PANTHER" id="PTHR30053:SF12">
    <property type="entry name" value="ELONGATION FACTOR P (EF-P) FAMILY PROTEIN"/>
    <property type="match status" value="1"/>
</dbReference>
<dbReference type="Pfam" id="PF01132">
    <property type="entry name" value="EFP"/>
    <property type="match status" value="1"/>
</dbReference>
<dbReference type="Pfam" id="PF08207">
    <property type="entry name" value="EFP_N"/>
    <property type="match status" value="1"/>
</dbReference>
<dbReference type="Pfam" id="PF09285">
    <property type="entry name" value="Elong-fact-P_C"/>
    <property type="match status" value="1"/>
</dbReference>
<dbReference type="PIRSF" id="PIRSF005901">
    <property type="entry name" value="EF-P"/>
    <property type="match status" value="1"/>
</dbReference>
<dbReference type="SMART" id="SM01185">
    <property type="entry name" value="EFP"/>
    <property type="match status" value="1"/>
</dbReference>
<dbReference type="SMART" id="SM00841">
    <property type="entry name" value="Elong-fact-P_C"/>
    <property type="match status" value="1"/>
</dbReference>
<dbReference type="SUPFAM" id="SSF50249">
    <property type="entry name" value="Nucleic acid-binding proteins"/>
    <property type="match status" value="2"/>
</dbReference>
<dbReference type="SUPFAM" id="SSF50104">
    <property type="entry name" value="Translation proteins SH3-like domain"/>
    <property type="match status" value="1"/>
</dbReference>
<dbReference type="PROSITE" id="PS01275">
    <property type="entry name" value="EFP"/>
    <property type="match status" value="1"/>
</dbReference>
<protein>
    <recommendedName>
        <fullName evidence="1">Elongation factor P</fullName>
        <shortName evidence="1">EF-P</shortName>
    </recommendedName>
</protein>
<feature type="chain" id="PRO_1000096145" description="Elongation factor P">
    <location>
        <begin position="1"/>
        <end position="186"/>
    </location>
</feature>
<keyword id="KW-0963">Cytoplasm</keyword>
<keyword id="KW-0251">Elongation factor</keyword>
<keyword id="KW-0648">Protein biosynthesis</keyword>
<keyword id="KW-1185">Reference proteome</keyword>
<gene>
    <name evidence="1" type="primary">efp</name>
    <name type="ordered locus">cce_2122</name>
</gene>
<name>EFP_CROS5</name>
<organism>
    <name type="scientific">Crocosphaera subtropica (strain ATCC 51142 / BH68)</name>
    <name type="common">Cyanothece sp. (strain ATCC 51142)</name>
    <dbReference type="NCBI Taxonomy" id="43989"/>
    <lineage>
        <taxon>Bacteria</taxon>
        <taxon>Bacillati</taxon>
        <taxon>Cyanobacteriota</taxon>
        <taxon>Cyanophyceae</taxon>
        <taxon>Oscillatoriophycideae</taxon>
        <taxon>Chroococcales</taxon>
        <taxon>Aphanothecaceae</taxon>
        <taxon>Crocosphaera</taxon>
        <taxon>Crocosphaera subtropica</taxon>
    </lineage>
</organism>
<sequence length="186" mass="20690">MISSNDFRTGTSIELDGSVWRVVEFLHVKPGKGSAFVRTKLKNAQTGSVVERTFRAGETVPQATLEKRTMQHTYKEGEQYVFMDMETYEEVRLSPEQMGTTVNYIKEEMEADVLFWNDTVLEVQLPTSVILEVTDTDPGVKGDTATGGTKPAIVETGAQVMVPLFISIGEKIKVDTRDGSYLGRET</sequence>
<proteinExistence type="inferred from homology"/>
<reference key="1">
    <citation type="journal article" date="2008" name="Proc. Natl. Acad. Sci. U.S.A.">
        <title>The genome of Cyanothece 51142, a unicellular diazotrophic cyanobacterium important in the marine nitrogen cycle.</title>
        <authorList>
            <person name="Welsh E.A."/>
            <person name="Liberton M."/>
            <person name="Stoeckel J."/>
            <person name="Loh T."/>
            <person name="Elvitigala T."/>
            <person name="Wang C."/>
            <person name="Wollam A."/>
            <person name="Fulton R.S."/>
            <person name="Clifton S.W."/>
            <person name="Jacobs J.M."/>
            <person name="Aurora R."/>
            <person name="Ghosh B.K."/>
            <person name="Sherman L.A."/>
            <person name="Smith R.D."/>
            <person name="Wilson R.K."/>
            <person name="Pakrasi H.B."/>
        </authorList>
    </citation>
    <scope>NUCLEOTIDE SEQUENCE [LARGE SCALE GENOMIC DNA]</scope>
    <source>
        <strain>ATCC 51142 / BH68</strain>
    </source>
</reference>
<accession>B1WNP3</accession>